<feature type="initiator methionine" description="Removed" evidence="2">
    <location>
        <position position="1"/>
    </location>
</feature>
<feature type="chain" id="PRO_0000319885" description="Neprilysin">
    <location>
        <begin position="2"/>
        <end position="750"/>
    </location>
</feature>
<feature type="topological domain" description="Cytoplasmic" evidence="3">
    <location>
        <begin position="2"/>
        <end position="28"/>
    </location>
</feature>
<feature type="transmembrane region" description="Helical; Signal-anchor for type II membrane protein" evidence="3">
    <location>
        <begin position="29"/>
        <end position="51"/>
    </location>
</feature>
<feature type="topological domain" description="Extracellular" evidence="3">
    <location>
        <begin position="52"/>
        <end position="750"/>
    </location>
</feature>
<feature type="domain" description="Peptidase M13" evidence="4">
    <location>
        <begin position="56"/>
        <end position="750"/>
    </location>
</feature>
<feature type="region of interest" description="Disordered" evidence="6">
    <location>
        <begin position="1"/>
        <end position="20"/>
    </location>
</feature>
<feature type="short sequence motif" description="Stop-transfer sequence" evidence="3">
    <location>
        <begin position="16"/>
        <end position="23"/>
    </location>
</feature>
<feature type="compositionally biased region" description="Polar residues" evidence="6">
    <location>
        <begin position="1"/>
        <end position="14"/>
    </location>
</feature>
<feature type="active site" evidence="4 5">
    <location>
        <position position="585"/>
    </location>
</feature>
<feature type="active site" description="Proton donor" evidence="4">
    <location>
        <position position="651"/>
    </location>
</feature>
<feature type="binding site" evidence="1">
    <location>
        <position position="103"/>
    </location>
    <ligand>
        <name>a peptide</name>
        <dbReference type="ChEBI" id="CHEBI:60466"/>
        <note>substrate</note>
    </ligand>
</feature>
<feature type="binding site" evidence="4 5">
    <location>
        <position position="584"/>
    </location>
    <ligand>
        <name>Zn(2+)</name>
        <dbReference type="ChEBI" id="CHEBI:29105"/>
        <note>catalytic</note>
    </ligand>
</feature>
<feature type="binding site" evidence="4 5">
    <location>
        <position position="588"/>
    </location>
    <ligand>
        <name>Zn(2+)</name>
        <dbReference type="ChEBI" id="CHEBI:29105"/>
        <note>catalytic</note>
    </ligand>
</feature>
<feature type="binding site" evidence="4">
    <location>
        <position position="647"/>
    </location>
    <ligand>
        <name>Zn(2+)</name>
        <dbReference type="ChEBI" id="CHEBI:29105"/>
        <note>catalytic</note>
    </ligand>
</feature>
<feature type="modified residue" description="Phosphoserine" evidence="2">
    <location>
        <position position="4"/>
    </location>
</feature>
<feature type="modified residue" description="Phosphoserine" evidence="2">
    <location>
        <position position="6"/>
    </location>
</feature>
<feature type="lipid moiety-binding region" description="N-myristoyl glycine" evidence="2">
    <location>
        <position position="2"/>
    </location>
</feature>
<feature type="glycosylation site" description="N-linked (GlcNAc...) asparagine" evidence="2">
    <location>
        <position position="145"/>
    </location>
</feature>
<feature type="glycosylation site" description="N-linked (GlcNAc...) asparagine" evidence="3">
    <location>
        <position position="285"/>
    </location>
</feature>
<feature type="glycosylation site" description="N-linked (GlcNAc...) asparagine" evidence="3">
    <location>
        <position position="311"/>
    </location>
</feature>
<feature type="glycosylation site" description="N-linked (GlcNAc...) asparagine" evidence="2">
    <location>
        <position position="325"/>
    </location>
</feature>
<feature type="glycosylation site" description="N-linked (GlcNAc...) asparagine" evidence="3">
    <location>
        <position position="335"/>
    </location>
</feature>
<feature type="glycosylation site" description="N-linked (GlcNAc...) asparagine" evidence="2">
    <location>
        <position position="628"/>
    </location>
</feature>
<feature type="disulfide bond" evidence="4">
    <location>
        <begin position="57"/>
        <end position="62"/>
    </location>
</feature>
<feature type="disulfide bond" evidence="4">
    <location>
        <begin position="80"/>
        <end position="735"/>
    </location>
</feature>
<feature type="disulfide bond" evidence="4">
    <location>
        <begin position="88"/>
        <end position="695"/>
    </location>
</feature>
<feature type="disulfide bond" evidence="4">
    <location>
        <begin position="143"/>
        <end position="411"/>
    </location>
</feature>
<feature type="disulfide bond" evidence="4">
    <location>
        <begin position="234"/>
        <end position="242"/>
    </location>
</feature>
<feature type="disulfide bond" evidence="4">
    <location>
        <begin position="621"/>
        <end position="747"/>
    </location>
</feature>
<feature type="sequence conflict" description="In Ref. 1; CAH89405." evidence="7" ref="1">
    <original>E</original>
    <variation>G</variation>
    <location>
        <position position="115"/>
    </location>
</feature>
<feature type="sequence conflict" description="In Ref. 1; CAH89405." evidence="7" ref="1">
    <original>E</original>
    <variation>K</variation>
    <location>
        <position position="175"/>
    </location>
</feature>
<feature type="sequence conflict" description="In Ref. 1; CAH89938." evidence="7" ref="1">
    <original>L</original>
    <variation>P</variation>
    <location>
        <position position="523"/>
    </location>
</feature>
<feature type="sequence conflict" description="In Ref. 1; CAH92963." evidence="7" ref="1">
    <original>N</original>
    <variation>S</variation>
    <location>
        <position position="681"/>
    </location>
</feature>
<feature type="sequence conflict" description="In Ref. 1; CAH92963." evidence="7" ref="1">
    <original>F</original>
    <variation>C</variation>
    <location>
        <position position="729"/>
    </location>
</feature>
<evidence type="ECO:0000250" key="1">
    <source>
        <dbReference type="UniProtKB" id="P07861"/>
    </source>
</evidence>
<evidence type="ECO:0000250" key="2">
    <source>
        <dbReference type="UniProtKB" id="P08473"/>
    </source>
</evidence>
<evidence type="ECO:0000255" key="3"/>
<evidence type="ECO:0000255" key="4">
    <source>
        <dbReference type="PROSITE-ProRule" id="PRU01233"/>
    </source>
</evidence>
<evidence type="ECO:0000255" key="5">
    <source>
        <dbReference type="PROSITE-ProRule" id="PRU10095"/>
    </source>
</evidence>
<evidence type="ECO:0000256" key="6">
    <source>
        <dbReference type="SAM" id="MobiDB-lite"/>
    </source>
</evidence>
<evidence type="ECO:0000305" key="7"/>
<comment type="function">
    <text evidence="2">Thermolysin-like specificity, but is almost confined on acting on polypeptides of up to 30 amino acids. Biologically important in the destruction of opioid peptides such as Met- and Leu-enkephalins by cleavage of a Gly-Phe bond. Catalyzes cleavage of bradykinin, substance P and neurotensin peptides. Able to cleave angiotensin-1, angiotensin-2 and angiotensin 1-9. Involved in the degradation of atrial natriuretic factor (ANF) and brain natriuretic factor (BNP(1-32)). Displays UV-inducible elastase activity toward skin preelastic and elastic fibers.</text>
</comment>
<comment type="catalytic activity">
    <reaction evidence="2">
        <text>Preferential cleavage of polypeptides between hydrophobic residues, particularly with Phe or Tyr at P1'.</text>
        <dbReference type="EC" id="3.4.24.11"/>
    </reaction>
</comment>
<comment type="catalytic activity">
    <reaction evidence="2">
        <text>substance P + H2O = substance P(1-9) + L-Leu-L-Met-NH2</text>
        <dbReference type="Rhea" id="RHEA:71459"/>
        <dbReference type="ChEBI" id="CHEBI:15377"/>
        <dbReference type="ChEBI" id="CHEBI:190692"/>
        <dbReference type="ChEBI" id="CHEBI:190693"/>
        <dbReference type="ChEBI" id="CHEBI:190700"/>
    </reaction>
    <physiologicalReaction direction="left-to-right" evidence="2">
        <dbReference type="Rhea" id="RHEA:71460"/>
    </physiologicalReaction>
</comment>
<comment type="catalytic activity">
    <reaction evidence="2">
        <text>substance P + H2O = substance P(1-7) + L-Phe-Gly-L-Leu-L-Met-NH2</text>
        <dbReference type="Rhea" id="RHEA:71467"/>
        <dbReference type="ChEBI" id="CHEBI:15377"/>
        <dbReference type="ChEBI" id="CHEBI:190692"/>
        <dbReference type="ChEBI" id="CHEBI:190695"/>
        <dbReference type="ChEBI" id="CHEBI:190698"/>
    </reaction>
    <physiologicalReaction direction="left-to-right" evidence="2">
        <dbReference type="Rhea" id="RHEA:71468"/>
    </physiologicalReaction>
</comment>
<comment type="catalytic activity">
    <reaction evidence="2">
        <text>neurotensin + H2O = neurotensin(1-11) + L-isoleucyl-L-leucine</text>
        <dbReference type="Rhea" id="RHEA:71475"/>
        <dbReference type="ChEBI" id="CHEBI:15377"/>
        <dbReference type="ChEBI" id="CHEBI:147362"/>
        <dbReference type="ChEBI" id="CHEBI:190704"/>
        <dbReference type="ChEBI" id="CHEBI:190706"/>
    </reaction>
    <physiologicalReaction direction="left-to-right" evidence="2">
        <dbReference type="Rhea" id="RHEA:71476"/>
    </physiologicalReaction>
</comment>
<comment type="catalytic activity">
    <reaction evidence="2">
        <text>neurotensin + H2O = neurotensin(1-10) + L-tyrosyl-L-isoleucyl-L-leucine</text>
        <dbReference type="Rhea" id="RHEA:71479"/>
        <dbReference type="ChEBI" id="CHEBI:15377"/>
        <dbReference type="ChEBI" id="CHEBI:147362"/>
        <dbReference type="ChEBI" id="CHEBI:190705"/>
        <dbReference type="ChEBI" id="CHEBI:190707"/>
    </reaction>
    <physiologicalReaction direction="left-to-right" evidence="2">
        <dbReference type="Rhea" id="RHEA:71480"/>
    </physiologicalReaction>
</comment>
<comment type="cofactor">
    <cofactor evidence="2">
        <name>Zn(2+)</name>
        <dbReference type="ChEBI" id="CHEBI:29105"/>
    </cofactor>
    <text evidence="2">Binds 1 zinc ion per subunit.</text>
</comment>
<comment type="subcellular location">
    <subcellularLocation>
        <location evidence="2">Cell membrane</location>
        <topology evidence="3">Single-pass type II membrane protein</topology>
    </subcellularLocation>
</comment>
<comment type="PTM">
    <text evidence="2">Myristoylation is a determinant of membrane targeting.</text>
</comment>
<comment type="PTM">
    <text evidence="2">Glycosylation at Asn-628 is necessary both for surface expression and neutral endopeptidase activity.</text>
</comment>
<comment type="similarity">
    <text evidence="4 7">Belongs to the peptidase M13 family.</text>
</comment>
<sequence>MGKSESQMDITDINTPKPKKKQRWTPLEISLSVLVLLLTIIAVTMIALYATYDDGICKSSDCIKSAARLIQNMDATAEPCTDFFKYACGGWLKRNVIPETSSRYGNFDILRDELEVVLKDVLQEPKTEDIVAVQKAKTLYRSCINESAIDSRGGEPLLKLLPDVYGWPVATENWEQKYGASWTAEKAIAQLNSKYGKKVLINLFVGTDDKNSVNHVIHIDQPRLGLPSRDYYECTGIYKEACTAYVDFMISVARLIRQEERLPIDENQLALEMNKVMELEKEIANATAKPEDRNDPMLLYKKMTLAQIQNNFSLEINGKPFSWLNFTNEIMSTVNISITNEEDVVVYAPEYLTKLKPILTKYSARDLQNLMSWRFIMDLVSSLSRTYKESRNAFRKALYGTTSETATWRRCANYVNGNMENAVGRLYVEAAFAGESKHVVEDLIAQIREVFIQTLDDLTWMDAETKKRAEEKALAIKERIGYPDDIVSNDNKLNNEYLELNYKEDEYFENIIQNLKFSQSKQLKKLREKVDKDEWISGAAVVNAFYSSGRNQIVFPAGILQPPFFSAQQSNSLNYGGIGMVIGHEITHGFDDNGRNFNKDGDLVDWWTQQSASNFKEQSQCMVYQYGNFSWDLAGGQHLNGINTLGENIADNGGLGQAYRAYQNYIKKNGEEKLLPGLDLNHKQLFFLNFAQVWCGTYRPEYAVNSIKTDVHSPGNFRIIGTLQNSAEFSEAFHCRKNSYMNPEKKCRVW</sequence>
<reference key="1">
    <citation type="submission" date="2004-11" db="EMBL/GenBank/DDBJ databases">
        <authorList>
            <consortium name="The German cDNA consortium"/>
        </authorList>
    </citation>
    <scope>NUCLEOTIDE SEQUENCE [LARGE SCALE MRNA]</scope>
    <source>
        <tissue>Kidney</tissue>
    </source>
</reference>
<proteinExistence type="evidence at transcript level"/>
<organism>
    <name type="scientific">Pongo abelii</name>
    <name type="common">Sumatran orangutan</name>
    <name type="synonym">Pongo pygmaeus abelii</name>
    <dbReference type="NCBI Taxonomy" id="9601"/>
    <lineage>
        <taxon>Eukaryota</taxon>
        <taxon>Metazoa</taxon>
        <taxon>Chordata</taxon>
        <taxon>Craniata</taxon>
        <taxon>Vertebrata</taxon>
        <taxon>Euteleostomi</taxon>
        <taxon>Mammalia</taxon>
        <taxon>Eutheria</taxon>
        <taxon>Euarchontoglires</taxon>
        <taxon>Primates</taxon>
        <taxon>Haplorrhini</taxon>
        <taxon>Catarrhini</taxon>
        <taxon>Hominidae</taxon>
        <taxon>Pongo</taxon>
    </lineage>
</organism>
<protein>
    <recommendedName>
        <fullName>Neprilysin</fullName>
        <ecNumber evidence="2">3.4.24.11</ecNumber>
    </recommendedName>
    <alternativeName>
        <fullName>Atriopeptidase</fullName>
    </alternativeName>
    <alternativeName>
        <fullName>Enkephalinase</fullName>
    </alternativeName>
    <alternativeName>
        <fullName>Neutral endopeptidase 24.11</fullName>
        <shortName>NEP</shortName>
        <shortName>Neutral endopeptidase</shortName>
    </alternativeName>
    <alternativeName>
        <fullName>Skin fibroblast elastase</fullName>
        <shortName>SFE</shortName>
    </alternativeName>
    <cdAntigenName>CD10</cdAntigenName>
</protein>
<accession>Q5RE69</accession>
<accession>Q5R5K3</accession>
<accession>Q5RFQ2</accession>
<dbReference type="EC" id="3.4.24.11" evidence="2"/>
<dbReference type="EMBL" id="CR857100">
    <property type="protein sequence ID" value="CAH89405.1"/>
    <property type="molecule type" value="mRNA"/>
</dbReference>
<dbReference type="EMBL" id="CR857668">
    <property type="protein sequence ID" value="CAH89938.1"/>
    <property type="molecule type" value="mRNA"/>
</dbReference>
<dbReference type="EMBL" id="CR860855">
    <property type="protein sequence ID" value="CAH92963.1"/>
    <property type="molecule type" value="mRNA"/>
</dbReference>
<dbReference type="RefSeq" id="NP_001126748.1">
    <property type="nucleotide sequence ID" value="NM_001133276.1"/>
</dbReference>
<dbReference type="SMR" id="Q5RE69"/>
<dbReference type="FunCoup" id="Q5RE69">
    <property type="interactions" value="527"/>
</dbReference>
<dbReference type="STRING" id="9601.ENSPPYP00000015904"/>
<dbReference type="MEROPS" id="M13.001"/>
<dbReference type="GlyCosmos" id="Q5RE69">
    <property type="glycosylation" value="6 sites, No reported glycans"/>
</dbReference>
<dbReference type="Ensembl" id="ENSPPYT00000050259.1">
    <property type="protein sequence ID" value="ENSPPYP00000036919.1"/>
    <property type="gene ID" value="ENSPPYG00000014224.3"/>
</dbReference>
<dbReference type="GeneID" id="100173750"/>
<dbReference type="KEGG" id="pon:100173750"/>
<dbReference type="CTD" id="4311"/>
<dbReference type="eggNOG" id="KOG3624">
    <property type="taxonomic scope" value="Eukaryota"/>
</dbReference>
<dbReference type="GeneTree" id="ENSGT00940000156745"/>
<dbReference type="HOGENOM" id="CLU_006187_8_0_1"/>
<dbReference type="InParanoid" id="Q5RE69"/>
<dbReference type="OMA" id="RNHDAWY"/>
<dbReference type="OrthoDB" id="6475849at2759"/>
<dbReference type="TreeFam" id="TF315192"/>
<dbReference type="Proteomes" id="UP000001595">
    <property type="component" value="Chromosome 3"/>
</dbReference>
<dbReference type="GO" id="GO:0030424">
    <property type="term" value="C:axon"/>
    <property type="evidence" value="ECO:0000250"/>
    <property type="project" value="UniProtKB"/>
</dbReference>
<dbReference type="GO" id="GO:0005903">
    <property type="term" value="C:brush border"/>
    <property type="evidence" value="ECO:0000250"/>
    <property type="project" value="UniProtKB"/>
</dbReference>
<dbReference type="GO" id="GO:0005813">
    <property type="term" value="C:centrosome"/>
    <property type="evidence" value="ECO:0007669"/>
    <property type="project" value="Ensembl"/>
</dbReference>
<dbReference type="GO" id="GO:0036064">
    <property type="term" value="C:ciliary basal body"/>
    <property type="evidence" value="ECO:0007669"/>
    <property type="project" value="Ensembl"/>
</dbReference>
<dbReference type="GO" id="GO:0005737">
    <property type="term" value="C:cytoplasm"/>
    <property type="evidence" value="ECO:0000250"/>
    <property type="project" value="UniProtKB"/>
</dbReference>
<dbReference type="GO" id="GO:0005829">
    <property type="term" value="C:cytosol"/>
    <property type="evidence" value="ECO:0007669"/>
    <property type="project" value="Ensembl"/>
</dbReference>
<dbReference type="GO" id="GO:0030425">
    <property type="term" value="C:dendrite"/>
    <property type="evidence" value="ECO:0000250"/>
    <property type="project" value="UniProtKB"/>
</dbReference>
<dbReference type="GO" id="GO:0005769">
    <property type="term" value="C:early endosome"/>
    <property type="evidence" value="ECO:0007669"/>
    <property type="project" value="Ensembl"/>
</dbReference>
<dbReference type="GO" id="GO:0005576">
    <property type="term" value="C:extracellular region"/>
    <property type="evidence" value="ECO:0007669"/>
    <property type="project" value="Ensembl"/>
</dbReference>
<dbReference type="GO" id="GO:0045121">
    <property type="term" value="C:membrane raft"/>
    <property type="evidence" value="ECO:0007669"/>
    <property type="project" value="Ensembl"/>
</dbReference>
<dbReference type="GO" id="GO:0044306">
    <property type="term" value="C:neuron projection terminus"/>
    <property type="evidence" value="ECO:0000250"/>
    <property type="project" value="UniProtKB"/>
</dbReference>
<dbReference type="GO" id="GO:0043025">
    <property type="term" value="C:neuronal cell body"/>
    <property type="evidence" value="ECO:0007669"/>
    <property type="project" value="Ensembl"/>
</dbReference>
<dbReference type="GO" id="GO:0005654">
    <property type="term" value="C:nucleoplasm"/>
    <property type="evidence" value="ECO:0007669"/>
    <property type="project" value="Ensembl"/>
</dbReference>
<dbReference type="GO" id="GO:0005886">
    <property type="term" value="C:plasma membrane"/>
    <property type="evidence" value="ECO:0000250"/>
    <property type="project" value="UniProtKB"/>
</dbReference>
<dbReference type="GO" id="GO:0045202">
    <property type="term" value="C:synapse"/>
    <property type="evidence" value="ECO:0000250"/>
    <property type="project" value="UniProtKB"/>
</dbReference>
<dbReference type="GO" id="GO:0008021">
    <property type="term" value="C:synaptic vesicle"/>
    <property type="evidence" value="ECO:0000250"/>
    <property type="project" value="UniProtKB"/>
</dbReference>
<dbReference type="GO" id="GO:0005802">
    <property type="term" value="C:trans-Golgi network"/>
    <property type="evidence" value="ECO:0007669"/>
    <property type="project" value="Ensembl"/>
</dbReference>
<dbReference type="GO" id="GO:1901612">
    <property type="term" value="F:cardiolipin binding"/>
    <property type="evidence" value="ECO:0007669"/>
    <property type="project" value="Ensembl"/>
</dbReference>
<dbReference type="GO" id="GO:0004181">
    <property type="term" value="F:metallocarboxypeptidase activity"/>
    <property type="evidence" value="ECO:0007669"/>
    <property type="project" value="Ensembl"/>
</dbReference>
<dbReference type="GO" id="GO:0004222">
    <property type="term" value="F:metalloendopeptidase activity"/>
    <property type="evidence" value="ECO:0000250"/>
    <property type="project" value="UniProtKB"/>
</dbReference>
<dbReference type="GO" id="GO:0042277">
    <property type="term" value="F:peptide binding"/>
    <property type="evidence" value="ECO:0000250"/>
    <property type="project" value="UniProtKB"/>
</dbReference>
<dbReference type="GO" id="GO:0001786">
    <property type="term" value="F:phosphatidylserine binding"/>
    <property type="evidence" value="ECO:0007669"/>
    <property type="project" value="Ensembl"/>
</dbReference>
<dbReference type="GO" id="GO:0042803">
    <property type="term" value="F:protein homodimerization activity"/>
    <property type="evidence" value="ECO:0007669"/>
    <property type="project" value="Ensembl"/>
</dbReference>
<dbReference type="GO" id="GO:0008270">
    <property type="term" value="F:zinc ion binding"/>
    <property type="evidence" value="ECO:0000250"/>
    <property type="project" value="UniProtKB"/>
</dbReference>
<dbReference type="GO" id="GO:0150094">
    <property type="term" value="P:amyloid-beta clearance by cellular catabolic process"/>
    <property type="evidence" value="ECO:0007669"/>
    <property type="project" value="Ensembl"/>
</dbReference>
<dbReference type="GO" id="GO:0050435">
    <property type="term" value="P:amyloid-beta metabolic process"/>
    <property type="evidence" value="ECO:0000250"/>
    <property type="project" value="UniProtKB"/>
</dbReference>
<dbReference type="GO" id="GO:0002003">
    <property type="term" value="P:angiotensin maturation"/>
    <property type="evidence" value="ECO:0007669"/>
    <property type="project" value="Ensembl"/>
</dbReference>
<dbReference type="GO" id="GO:0010815">
    <property type="term" value="P:bradykinin catabolic process"/>
    <property type="evidence" value="ECO:0000250"/>
    <property type="project" value="UniProtKB"/>
</dbReference>
<dbReference type="GO" id="GO:0071345">
    <property type="term" value="P:cellular response to cytokine stimulus"/>
    <property type="evidence" value="ECO:0000250"/>
    <property type="project" value="UniProtKB"/>
</dbReference>
<dbReference type="GO" id="GO:0071492">
    <property type="term" value="P:cellular response to UV-A"/>
    <property type="evidence" value="ECO:0000250"/>
    <property type="project" value="UniProtKB"/>
</dbReference>
<dbReference type="GO" id="GO:0071493">
    <property type="term" value="P:cellular response to UV-B"/>
    <property type="evidence" value="ECO:0000250"/>
    <property type="project" value="UniProtKB"/>
</dbReference>
<dbReference type="GO" id="GO:0046449">
    <property type="term" value="P:creatinine metabolic process"/>
    <property type="evidence" value="ECO:0000250"/>
    <property type="project" value="UniProtKB"/>
</dbReference>
<dbReference type="GO" id="GO:0042447">
    <property type="term" value="P:hormone catabolic process"/>
    <property type="evidence" value="ECO:0000250"/>
    <property type="project" value="UniProtKB"/>
</dbReference>
<dbReference type="GO" id="GO:0001822">
    <property type="term" value="P:kidney development"/>
    <property type="evidence" value="ECO:0000250"/>
    <property type="project" value="UniProtKB"/>
</dbReference>
<dbReference type="GO" id="GO:0007611">
    <property type="term" value="P:learning or memory"/>
    <property type="evidence" value="ECO:0007669"/>
    <property type="project" value="Ensembl"/>
</dbReference>
<dbReference type="GO" id="GO:0061837">
    <property type="term" value="P:neuropeptide processing"/>
    <property type="evidence" value="ECO:0007669"/>
    <property type="project" value="Ensembl"/>
</dbReference>
<dbReference type="GO" id="GO:0006518">
    <property type="term" value="P:peptide metabolic process"/>
    <property type="evidence" value="ECO:0000250"/>
    <property type="project" value="UniProtKB"/>
</dbReference>
<dbReference type="GO" id="GO:1900273">
    <property type="term" value="P:positive regulation of long-term synaptic potentiation"/>
    <property type="evidence" value="ECO:0007669"/>
    <property type="project" value="Ensembl"/>
</dbReference>
<dbReference type="GO" id="GO:0050769">
    <property type="term" value="P:positive regulation of neurogenesis"/>
    <property type="evidence" value="ECO:0007669"/>
    <property type="project" value="Ensembl"/>
</dbReference>
<dbReference type="GO" id="GO:0006508">
    <property type="term" value="P:proteolysis"/>
    <property type="evidence" value="ECO:0000250"/>
    <property type="project" value="UniProtKB"/>
</dbReference>
<dbReference type="GO" id="GO:0090399">
    <property type="term" value="P:replicative senescence"/>
    <property type="evidence" value="ECO:0000250"/>
    <property type="project" value="UniProtKB"/>
</dbReference>
<dbReference type="GO" id="GO:0019233">
    <property type="term" value="P:sensory perception of pain"/>
    <property type="evidence" value="ECO:0000250"/>
    <property type="project" value="UniProtKB"/>
</dbReference>
<dbReference type="GO" id="GO:0010814">
    <property type="term" value="P:substance P catabolic process"/>
    <property type="evidence" value="ECO:0000250"/>
    <property type="project" value="UniProtKB"/>
</dbReference>
<dbReference type="CDD" id="cd08662">
    <property type="entry name" value="M13"/>
    <property type="match status" value="1"/>
</dbReference>
<dbReference type="FunFam" id="1.10.1380.10:FF:000002">
    <property type="entry name" value="Membrane metalloendopeptidase"/>
    <property type="match status" value="1"/>
</dbReference>
<dbReference type="Gene3D" id="3.40.390.10">
    <property type="entry name" value="Collagenase (Catalytic Domain)"/>
    <property type="match status" value="1"/>
</dbReference>
<dbReference type="Gene3D" id="1.10.1380.10">
    <property type="entry name" value="Neutral endopeptidase , domain2"/>
    <property type="match status" value="1"/>
</dbReference>
<dbReference type="InterPro" id="IPR024079">
    <property type="entry name" value="MetalloPept_cat_dom_sf"/>
</dbReference>
<dbReference type="InterPro" id="IPR000718">
    <property type="entry name" value="Peptidase_M13"/>
</dbReference>
<dbReference type="InterPro" id="IPR018497">
    <property type="entry name" value="Peptidase_M13_C"/>
</dbReference>
<dbReference type="InterPro" id="IPR042089">
    <property type="entry name" value="Peptidase_M13_dom_2"/>
</dbReference>
<dbReference type="InterPro" id="IPR008753">
    <property type="entry name" value="Peptidase_M13_N"/>
</dbReference>
<dbReference type="PANTHER" id="PTHR11733:SF114">
    <property type="entry name" value="NEPRILYSIN"/>
    <property type="match status" value="1"/>
</dbReference>
<dbReference type="PANTHER" id="PTHR11733">
    <property type="entry name" value="ZINC METALLOPROTEASE FAMILY M13 NEPRILYSIN-RELATED"/>
    <property type="match status" value="1"/>
</dbReference>
<dbReference type="Pfam" id="PF01431">
    <property type="entry name" value="Peptidase_M13"/>
    <property type="match status" value="1"/>
</dbReference>
<dbReference type="Pfam" id="PF05649">
    <property type="entry name" value="Peptidase_M13_N"/>
    <property type="match status" value="1"/>
</dbReference>
<dbReference type="PRINTS" id="PR00786">
    <property type="entry name" value="NEPRILYSIN"/>
</dbReference>
<dbReference type="SUPFAM" id="SSF55486">
    <property type="entry name" value="Metalloproteases ('zincins'), catalytic domain"/>
    <property type="match status" value="1"/>
</dbReference>
<dbReference type="PROSITE" id="PS51885">
    <property type="entry name" value="NEPRILYSIN"/>
    <property type="match status" value="1"/>
</dbReference>
<dbReference type="PROSITE" id="PS00142">
    <property type="entry name" value="ZINC_PROTEASE"/>
    <property type="match status" value="1"/>
</dbReference>
<keyword id="KW-1003">Cell membrane</keyword>
<keyword id="KW-1015">Disulfide bond</keyword>
<keyword id="KW-0325">Glycoprotein</keyword>
<keyword id="KW-0378">Hydrolase</keyword>
<keyword id="KW-0449">Lipoprotein</keyword>
<keyword id="KW-0472">Membrane</keyword>
<keyword id="KW-0479">Metal-binding</keyword>
<keyword id="KW-0482">Metalloprotease</keyword>
<keyword id="KW-0519">Myristate</keyword>
<keyword id="KW-0597">Phosphoprotein</keyword>
<keyword id="KW-0645">Protease</keyword>
<keyword id="KW-1185">Reference proteome</keyword>
<keyword id="KW-0735">Signal-anchor</keyword>
<keyword id="KW-0812">Transmembrane</keyword>
<keyword id="KW-1133">Transmembrane helix</keyword>
<keyword id="KW-0862">Zinc</keyword>
<name>NEP_PONAB</name>
<gene>
    <name type="primary">MME</name>
</gene>